<evidence type="ECO:0000250" key="1">
    <source>
        <dbReference type="UniProtKB" id="Q86V48"/>
    </source>
</evidence>
<evidence type="ECO:0000250" key="2">
    <source>
        <dbReference type="UniProtKB" id="Q8R4U7"/>
    </source>
</evidence>
<evidence type="ECO:0000255" key="3"/>
<evidence type="ECO:0000256" key="4">
    <source>
        <dbReference type="SAM" id="MobiDB-lite"/>
    </source>
</evidence>
<evidence type="ECO:0000269" key="5">
    <source>
    </source>
</evidence>
<evidence type="ECO:0007744" key="6">
    <source>
    </source>
</evidence>
<sequence length="1051" mass="117176">MADIANYKDAASNRHLRFKLQSLSRRLDELEEATKNLQKAEDELLDLQDKVIQAEGSNSSMLAEIEVLRQRVLKIEGKDEEIKRAEDLCHTMKEKLEEEENLTRELKSEIDRLQKRMADLEKLEEALSRSKNECSQLCLSLNEERNLTKKISSELEMLRVKVKELESSEDRLEKTEQSLVSELEKLKSLTLSFVNERKYLNEKEKENEKLIKELTQKLEQNKKINRDHMRNASTFLERNDLRIEDGISSTLPSKESRRKGSLDYLKQVENETRDKSENEKNRNQEDNKVKDLNQEIEKLKTQIKHFESLEEELKKMRAKNNDLQDNYLTELNKNRSLASQLEEVKLQVKKQKELGNGDIEGEDAFLLGRGRHERTKLKGHGGEVSVSKHTSREQSPQHKRERLRNRGFALNDEHCSLSNKQVSSPAFTNKRAAKASNMGVGPDSGTQETKRTEDRLAPGSSQSEGKKGREQPSVLSRYPPAAQDHTKVWRGNPKPGTESGLKGKVEKTTRTFSDSAHGSVPNDVVGKGDKTSDFSSEAHCGKRGQVPGHASQVTQVAESGCSKAIGALASSQRASSEGLSKGKKAANGLETDANFPHSKAPILSKYPYSSRSQENILQGFSVPNKEGVDHSVAVVMEDSSQHEALRCRVIKSSGREKPDSDDDLDIESLVTAKLVNTTITPEPEPKLQPNSREKVKSRGGTRTPLFENDKNAAVENDSAKSMRSSSNAVEFPDANCAGVKNQRPFSPREALRSRAIIKPVIIDKDVKKIMGGSGTEVVLEKQKSTPKSVTSKVTSSITIYPSDSSGPRAVPTEAPRERHTSTSNIQVGPPELTSVSNHISSPLELSIHKHDITLQLTEAERVGDGSPKNRAETVVSRSSILIKPSDSVERNSHAFPAETIRWKSHSTSSEVASSDTRHITVRNAWKSKRDLKCSEDPPTRIGRNVEATNAYTQRSSTDFLELEQPRSHPPEQGTRKVGNSGDAPELSSRRTQSSLTASEVLTRRNRIGDAVTAASWNHSSNVVSLTFLPSALICLTEDLGNTEGWEMLNLR</sequence>
<feature type="initiator methionine" description="Removed" evidence="1">
    <location>
        <position position="1"/>
    </location>
</feature>
<feature type="chain" id="PRO_0000234552" description="Leucine zipper protein 1">
    <location>
        <begin position="2"/>
        <end position="1051"/>
    </location>
</feature>
<feature type="region of interest" description="Disordered" evidence="4">
    <location>
        <begin position="247"/>
        <end position="293"/>
    </location>
</feature>
<feature type="region of interest" description="Disordered" evidence="4">
    <location>
        <begin position="374"/>
        <end position="401"/>
    </location>
</feature>
<feature type="region of interest" description="Disordered" evidence="4">
    <location>
        <begin position="432"/>
        <end position="554"/>
    </location>
</feature>
<feature type="region of interest" description="Disordered" evidence="4">
    <location>
        <begin position="569"/>
        <end position="601"/>
    </location>
</feature>
<feature type="region of interest" description="Disordered" evidence="4">
    <location>
        <begin position="675"/>
        <end position="727"/>
    </location>
</feature>
<feature type="region of interest" description="Disordered" evidence="4">
    <location>
        <begin position="789"/>
        <end position="837"/>
    </location>
</feature>
<feature type="region of interest" description="Required for interaction with FLNA" evidence="1">
    <location>
        <begin position="834"/>
        <end position="884"/>
    </location>
</feature>
<feature type="region of interest" description="Disordered" evidence="4">
    <location>
        <begin position="929"/>
        <end position="1000"/>
    </location>
</feature>
<feature type="coiled-coil region" evidence="3">
    <location>
        <begin position="11"/>
        <end position="354"/>
    </location>
</feature>
<feature type="compositionally biased region" description="Basic and acidic residues" evidence="4">
    <location>
        <begin position="254"/>
        <end position="293"/>
    </location>
</feature>
<feature type="compositionally biased region" description="Polar residues" evidence="4">
    <location>
        <begin position="569"/>
        <end position="578"/>
    </location>
</feature>
<feature type="compositionally biased region" description="Basic and acidic residues" evidence="4">
    <location>
        <begin position="707"/>
        <end position="720"/>
    </location>
</feature>
<feature type="compositionally biased region" description="Low complexity" evidence="4">
    <location>
        <begin position="789"/>
        <end position="799"/>
    </location>
</feature>
<feature type="compositionally biased region" description="Basic and acidic residues" evidence="4">
    <location>
        <begin position="929"/>
        <end position="938"/>
    </location>
</feature>
<feature type="compositionally biased region" description="Polar residues" evidence="4">
    <location>
        <begin position="946"/>
        <end position="958"/>
    </location>
</feature>
<feature type="compositionally biased region" description="Polar residues" evidence="4">
    <location>
        <begin position="989"/>
        <end position="999"/>
    </location>
</feature>
<feature type="modified residue" description="N-acetylalanine" evidence="1">
    <location>
        <position position="2"/>
    </location>
</feature>
<feature type="modified residue" description="Phosphoserine" evidence="1">
    <location>
        <position position="256"/>
    </location>
</feature>
<feature type="modified residue" description="Phosphoserine" evidence="6">
    <location>
        <position position="261"/>
    </location>
</feature>
<feature type="modified residue" description="Phosphoserine" evidence="1">
    <location>
        <position position="395"/>
    </location>
</feature>
<feature type="modified residue" description="Phosphoserine" evidence="1">
    <location>
        <position position="513"/>
    </location>
</feature>
<feature type="modified residue" description="Phosphoserine" evidence="1">
    <location>
        <position position="571"/>
    </location>
</feature>
<feature type="modified residue" description="Phosphoserine" evidence="1">
    <location>
        <position position="575"/>
    </location>
</feature>
<feature type="modified residue" description="Phosphoserine" evidence="6">
    <location>
        <position position="612"/>
    </location>
</feature>
<feature type="modified residue" description="Phosphoserine" evidence="6">
    <location>
        <position position="660"/>
    </location>
</feature>
<feature type="modified residue" description="Phosphothreonine" evidence="1">
    <location>
        <position position="680"/>
    </location>
</feature>
<feature type="modified residue" description="Phosphoserine" evidence="1">
    <location>
        <position position="691"/>
    </location>
</feature>
<feature type="modified residue" description="Phosphoserine" evidence="1">
    <location>
        <position position="746"/>
    </location>
</feature>
<feature type="modified residue" description="Phosphoserine" evidence="1">
    <location>
        <position position="906"/>
    </location>
</feature>
<feature type="modified residue" description="Phosphothreonine" evidence="1">
    <location>
        <position position="957"/>
    </location>
</feature>
<feature type="modified residue" description="Phosphoserine" evidence="1">
    <location>
        <position position="993"/>
    </location>
</feature>
<reference key="1">
    <citation type="journal article" date="1996" name="Genomics">
        <title>Identification, molecular characterization, and chromosomal localization of the cDNA encoding a novel leucine zipper motif-containing protein.</title>
        <authorList>
            <person name="Sun D.-S."/>
            <person name="Chang A.C."/>
            <person name="Jenkins N.A."/>
            <person name="Gilbert D.J."/>
            <person name="Copeland N.G."/>
            <person name="Chang N.-C.A."/>
        </authorList>
    </citation>
    <scope>NUCLEOTIDE SEQUENCE [MRNA]</scope>
    <scope>SUBCELLULAR LOCATION</scope>
    <scope>TISSUE SPECIFICITY</scope>
    <source>
        <tissue>Brain</tissue>
    </source>
</reference>
<reference key="2">
    <citation type="journal article" date="2012" name="Nat. Commun.">
        <title>Quantitative maps of protein phosphorylation sites across 14 different rat organs and tissues.</title>
        <authorList>
            <person name="Lundby A."/>
            <person name="Secher A."/>
            <person name="Lage K."/>
            <person name="Nordsborg N.B."/>
            <person name="Dmytriyev A."/>
            <person name="Lundby C."/>
            <person name="Olsen J.V."/>
        </authorList>
    </citation>
    <scope>PHOSPHORYLATION [LARGE SCALE ANALYSIS] AT SER-261; SER-612 AND SER-660</scope>
    <scope>IDENTIFICATION BY MASS SPECTROMETRY [LARGE SCALE ANALYSIS]</scope>
</reference>
<comment type="function">
    <text evidence="1 2">F-actin cross-linking protein (By similarity). Stabilizes actin and acts as a negative regulator of primary cilium formation (By similarity). Positively regulates the phosphorylation of both myosin II and protein phosphatase 1 regulatory subunit PPP1R12A/MYPT1 and promotes the assembly of myosin II stacks within actin stress fibers (By similarity). Inhibits the phosphorylation of myosin light chain MYL9 by DAPK3 and suppresses the constriction velocity of the contractile ring during cytokinesis (By similarity). Binds to microtubules and promotes epithelial cell apical constriction by up-regulating levels of diphosphorylated myosin light chain (MLC) through microtubule-dependent inhibition of MLC dephosphorylation by myosin phosphatase (By similarity). Involved in regulation of cell migration, nuclear size and centriole number, probably through regulation of the actin cytoskeleton (By similarity). Component of the CERF-1 and CERF-5 chromatin remodeling complexes in embryonic stem cells where it acts to stabilize the complexes (By similarity). Plays a role in embryonic brain and cardiovascular development (By similarity).</text>
</comment>
<comment type="subunit">
    <text evidence="1 2">Component of the CERF-1 ISWI chromatin remodeling complex (also called the CECR2-containing remodeling factor (CERF) complex) at least composed of CECR2 and SMARCA1 (By similarity). Component of the CERF-5 ISWI chromatin remodeling complex at least composed of CECR2 and SMARCA5/SNF2H (By similarity). LUZP1 is detected as part of the CERF-1 and CERF-5 complexes in embryonic stem (ES) cells where it is involved in complex stabilization but is not detected in the complexes in the testis (By similarity). Interacts (via C-terminus) with LIMA1/EPLIN; both proteins restrict ciliation and may work together to regulate this process (By similarity). Interacts with myosin light chain MYL9; the interaction results in inhibition of phosphorylation of MYL9 by DAPK3 (By similarity). Interacts with DAPK3; the interaction is likely to occur throughout the cell cycle and reduces the LUZP1-mediated suppression of MYL9 phosphorylation (By similarity). Interacts with the chromosomal passenger complex (CPC); CPC kinase activity is required for localization of LUZP1 to the centromere (By similarity).</text>
</comment>
<comment type="subcellular location">
    <subcellularLocation>
        <location evidence="1">Cytoplasm</location>
        <location evidence="1">Cytoskeleton</location>
        <location evidence="1">Microtubule organizing center</location>
        <location evidence="1">Centrosome</location>
    </subcellularLocation>
    <subcellularLocation>
        <location evidence="1">Cytoplasm</location>
        <location evidence="1">Cytoskeleton</location>
        <location evidence="1">Cilium basal body</location>
    </subcellularLocation>
    <subcellularLocation>
        <location evidence="1">Midbody</location>
    </subcellularLocation>
    <subcellularLocation>
        <location evidence="1">Chromosome</location>
        <location evidence="1">Centromere</location>
    </subcellularLocation>
    <subcellularLocation>
        <location evidence="1">Cytoplasm</location>
        <location evidence="1">Cytoskeleton</location>
        <location evidence="1">Spindle</location>
    </subcellularLocation>
    <subcellularLocation>
        <location evidence="1">Cytoplasm</location>
        <location evidence="1">Cytoskeleton</location>
        <location evidence="1">Stress fiber</location>
    </subcellularLocation>
    <subcellularLocation>
        <location evidence="5">Nucleus</location>
    </subcellularLocation>
    <subcellularLocation>
        <location evidence="5">Cell projection</location>
        <location evidence="5">Dendrite</location>
    </subcellularLocation>
    <subcellularLocation>
        <location evidence="5">Perikaryon</location>
    </subcellularLocation>
    <subcellularLocation>
        <location evidence="2">Cell junction</location>
        <location evidence="2">Tight junction</location>
    </subcellularLocation>
    <text evidence="1 5">Localizes to the proximal end of basal bodies (By similarity). During mitosis, localizes at the inner centromere in metaphase, at the central spindle in anaphase, and at the midbody in telophase (By similarity). Central spindle localization requires KIF20A while centromere localization requires the kinase activity of the chromosomal passenger complex (By similarity).</text>
</comment>
<comment type="tissue specificity">
    <text evidence="5">Expressed in cerebral cortex, cerebellum, hippocampus and brain stem.</text>
</comment>
<gene>
    <name type="primary">Luzp1</name>
    <name type="synonym">Luzp</name>
</gene>
<name>LUZP1_RAT</name>
<protein>
    <recommendedName>
        <fullName>Leucine zipper protein 1</fullName>
    </recommendedName>
    <alternativeName>
        <fullName evidence="1">Filamin mechanobinding actin cross-linking protein</fullName>
        <shortName evidence="1">Fimbacin</shortName>
    </alternativeName>
    <alternativeName>
        <fullName>Leucine zipper motif-containing protein</fullName>
    </alternativeName>
</protein>
<proteinExistence type="evidence at protein level"/>
<accession>Q9ESV1</accession>
<organism>
    <name type="scientific">Rattus norvegicus</name>
    <name type="common">Rat</name>
    <dbReference type="NCBI Taxonomy" id="10116"/>
    <lineage>
        <taxon>Eukaryota</taxon>
        <taxon>Metazoa</taxon>
        <taxon>Chordata</taxon>
        <taxon>Craniata</taxon>
        <taxon>Vertebrata</taxon>
        <taxon>Euteleostomi</taxon>
        <taxon>Mammalia</taxon>
        <taxon>Eutheria</taxon>
        <taxon>Euarchontoglires</taxon>
        <taxon>Glires</taxon>
        <taxon>Rodentia</taxon>
        <taxon>Myomorpha</taxon>
        <taxon>Muroidea</taxon>
        <taxon>Muridae</taxon>
        <taxon>Murinae</taxon>
        <taxon>Rattus</taxon>
    </lineage>
</organism>
<keyword id="KW-0007">Acetylation</keyword>
<keyword id="KW-0009">Actin-binding</keyword>
<keyword id="KW-0965">Cell junction</keyword>
<keyword id="KW-0966">Cell projection</keyword>
<keyword id="KW-0137">Centromere</keyword>
<keyword id="KW-0158">Chromosome</keyword>
<keyword id="KW-0175">Coiled coil</keyword>
<keyword id="KW-0963">Cytoplasm</keyword>
<keyword id="KW-0206">Cytoskeleton</keyword>
<keyword id="KW-0493">Microtubule</keyword>
<keyword id="KW-0539">Nucleus</keyword>
<keyword id="KW-0597">Phosphoprotein</keyword>
<keyword id="KW-1185">Reference proteome</keyword>
<keyword id="KW-0796">Tight junction</keyword>
<dbReference type="EMBL" id="AF181259">
    <property type="protein sequence ID" value="AAG02142.1"/>
    <property type="molecule type" value="mRNA"/>
</dbReference>
<dbReference type="SMR" id="Q9ESV1"/>
<dbReference type="FunCoup" id="Q9ESV1">
    <property type="interactions" value="948"/>
</dbReference>
<dbReference type="STRING" id="10116.ENSRNOP00000016514"/>
<dbReference type="iPTMnet" id="Q9ESV1"/>
<dbReference type="PhosphoSitePlus" id="Q9ESV1"/>
<dbReference type="PaxDb" id="10116-ENSRNOP00000016514"/>
<dbReference type="PeptideAtlas" id="Q9ESV1"/>
<dbReference type="AGR" id="RGD:61839"/>
<dbReference type="RGD" id="61839">
    <property type="gene designation" value="Luzp1"/>
</dbReference>
<dbReference type="eggNOG" id="ENOG502QV81">
    <property type="taxonomic scope" value="Eukaryota"/>
</dbReference>
<dbReference type="InParanoid" id="Q9ESV1"/>
<dbReference type="PRO" id="PR:Q9ESV1"/>
<dbReference type="Proteomes" id="UP000002494">
    <property type="component" value="Unplaced"/>
</dbReference>
<dbReference type="GO" id="GO:0015629">
    <property type="term" value="C:actin cytoskeleton"/>
    <property type="evidence" value="ECO:0000318"/>
    <property type="project" value="GO_Central"/>
</dbReference>
<dbReference type="GO" id="GO:0005884">
    <property type="term" value="C:actin filament"/>
    <property type="evidence" value="ECO:0000250"/>
    <property type="project" value="UniProtKB"/>
</dbReference>
<dbReference type="GO" id="GO:0005923">
    <property type="term" value="C:bicellular tight junction"/>
    <property type="evidence" value="ECO:0007669"/>
    <property type="project" value="UniProtKB-SubCell"/>
</dbReference>
<dbReference type="GO" id="GO:0005813">
    <property type="term" value="C:centrosome"/>
    <property type="evidence" value="ECO:0000250"/>
    <property type="project" value="UniProtKB"/>
</dbReference>
<dbReference type="GO" id="GO:0090537">
    <property type="term" value="C:CERF complex"/>
    <property type="evidence" value="ECO:0000250"/>
    <property type="project" value="UniProtKB"/>
</dbReference>
<dbReference type="GO" id="GO:0000775">
    <property type="term" value="C:chromosome, centromeric region"/>
    <property type="evidence" value="ECO:0000250"/>
    <property type="project" value="UniProtKB"/>
</dbReference>
<dbReference type="GO" id="GO:0036064">
    <property type="term" value="C:ciliary basal body"/>
    <property type="evidence" value="ECO:0000250"/>
    <property type="project" value="UniProtKB"/>
</dbReference>
<dbReference type="GO" id="GO:0005737">
    <property type="term" value="C:cytoplasm"/>
    <property type="evidence" value="ECO:0007669"/>
    <property type="project" value="UniProtKB-KW"/>
</dbReference>
<dbReference type="GO" id="GO:0030425">
    <property type="term" value="C:dendrite"/>
    <property type="evidence" value="ECO:0007669"/>
    <property type="project" value="UniProtKB-SubCell"/>
</dbReference>
<dbReference type="GO" id="GO:0005874">
    <property type="term" value="C:microtubule"/>
    <property type="evidence" value="ECO:0007669"/>
    <property type="project" value="UniProtKB-KW"/>
</dbReference>
<dbReference type="GO" id="GO:0030496">
    <property type="term" value="C:midbody"/>
    <property type="evidence" value="ECO:0000250"/>
    <property type="project" value="UniProtKB"/>
</dbReference>
<dbReference type="GO" id="GO:0005634">
    <property type="term" value="C:nucleus"/>
    <property type="evidence" value="ECO:0000266"/>
    <property type="project" value="RGD"/>
</dbReference>
<dbReference type="GO" id="GO:0043204">
    <property type="term" value="C:perikaryon"/>
    <property type="evidence" value="ECO:0007669"/>
    <property type="project" value="UniProtKB-SubCell"/>
</dbReference>
<dbReference type="GO" id="GO:0051233">
    <property type="term" value="C:spindle midzone"/>
    <property type="evidence" value="ECO:0000250"/>
    <property type="project" value="UniProtKB"/>
</dbReference>
<dbReference type="GO" id="GO:0001725">
    <property type="term" value="C:stress fiber"/>
    <property type="evidence" value="ECO:0000250"/>
    <property type="project" value="UniProtKB"/>
</dbReference>
<dbReference type="GO" id="GO:0070160">
    <property type="term" value="C:tight junction"/>
    <property type="evidence" value="ECO:0000250"/>
    <property type="project" value="UniProtKB"/>
</dbReference>
<dbReference type="GO" id="GO:0051015">
    <property type="term" value="F:actin filament binding"/>
    <property type="evidence" value="ECO:0000250"/>
    <property type="project" value="UniProtKB"/>
</dbReference>
<dbReference type="GO" id="GO:0008017">
    <property type="term" value="F:microtubule binding"/>
    <property type="evidence" value="ECO:0000250"/>
    <property type="project" value="UniProtKB"/>
</dbReference>
<dbReference type="GO" id="GO:0003383">
    <property type="term" value="P:apical constriction"/>
    <property type="evidence" value="ECO:0000250"/>
    <property type="project" value="UniProtKB"/>
</dbReference>
<dbReference type="GO" id="GO:0060840">
    <property type="term" value="P:artery development"/>
    <property type="evidence" value="ECO:0000266"/>
    <property type="project" value="RGD"/>
</dbReference>
<dbReference type="GO" id="GO:0036213">
    <property type="term" value="P:contractile ring contraction"/>
    <property type="evidence" value="ECO:0000250"/>
    <property type="project" value="UniProtKB"/>
</dbReference>
<dbReference type="GO" id="GO:1902018">
    <property type="term" value="P:negative regulation of cilium assembly"/>
    <property type="evidence" value="ECO:0000250"/>
    <property type="project" value="UniProtKB"/>
</dbReference>
<dbReference type="GO" id="GO:0021503">
    <property type="term" value="P:neural fold bending"/>
    <property type="evidence" value="ECO:0000266"/>
    <property type="project" value="RGD"/>
</dbReference>
<dbReference type="GO" id="GO:1903119">
    <property type="term" value="P:protein localization to actin cytoskeleton"/>
    <property type="evidence" value="ECO:0000318"/>
    <property type="project" value="GO_Central"/>
</dbReference>
<dbReference type="GO" id="GO:0061635">
    <property type="term" value="P:regulation of protein complex stability"/>
    <property type="evidence" value="ECO:0000250"/>
    <property type="project" value="UniProtKB"/>
</dbReference>
<dbReference type="GO" id="GO:0043149">
    <property type="term" value="P:stress fiber assembly"/>
    <property type="evidence" value="ECO:0000250"/>
    <property type="project" value="UniProtKB"/>
</dbReference>
<dbReference type="GO" id="GO:0003281">
    <property type="term" value="P:ventricular septum development"/>
    <property type="evidence" value="ECO:0000266"/>
    <property type="project" value="RGD"/>
</dbReference>
<dbReference type="InterPro" id="IPR050719">
    <property type="entry name" value="Cortactin-Actin_Reg"/>
</dbReference>
<dbReference type="PANTHER" id="PTHR23166">
    <property type="entry name" value="FILAMIN/GPBP-INTERACTING PROTEIN"/>
    <property type="match status" value="1"/>
</dbReference>
<dbReference type="PANTHER" id="PTHR23166:SF7">
    <property type="entry name" value="LEUCINE ZIPPER PROTEIN 1"/>
    <property type="match status" value="1"/>
</dbReference>